<comment type="function">
    <text evidence="3 4">Probable C to U editing enzyme whose physiological substrate is not yet known. Does not display detectable apoB mRNA editing. Has a low intrinsic cytidine deaminase activity. May play a role in the epigenetic regulation of gene expression through the process of active DNA demethylation.</text>
</comment>
<comment type="catalytic activity">
    <reaction evidence="3">
        <text>cytidine(6666) in apoB mRNA + H2O + H(+) = uridine(6666) in apoB mRNA + NH4(+)</text>
        <dbReference type="Rhea" id="RHEA:21772"/>
        <dbReference type="Rhea" id="RHEA-COMP:13888"/>
        <dbReference type="Rhea" id="RHEA-COMP:13889"/>
        <dbReference type="ChEBI" id="CHEBI:15377"/>
        <dbReference type="ChEBI" id="CHEBI:15378"/>
        <dbReference type="ChEBI" id="CHEBI:28938"/>
        <dbReference type="ChEBI" id="CHEBI:65315"/>
        <dbReference type="ChEBI" id="CHEBI:82748"/>
        <dbReference type="EC" id="3.5.4.36"/>
    </reaction>
</comment>
<comment type="cofactor">
    <cofactor evidence="3">
        <name>Zn(2+)</name>
        <dbReference type="ChEBI" id="CHEBI:29105"/>
    </cofactor>
    <text evidence="3">Binds 1 Zn(2+) ion per subunit.</text>
</comment>
<comment type="subunit">
    <text evidence="3">Homotetramer.</text>
</comment>
<comment type="interaction">
    <interactant intactId="EBI-15616888">
        <id>Q9Y235</id>
    </interactant>
    <interactant intactId="EBI-15616888">
        <id>Q9Y235</id>
        <label>APOBEC2</label>
    </interactant>
    <organismsDiffer>false</organismsDiffer>
    <experiments>2</experiments>
</comment>
<comment type="tissue specificity">
    <text>Expressed exclusively in heart and skeletal muscle.</text>
</comment>
<comment type="similarity">
    <text evidence="6">Belongs to the cytidine and deoxycytidylate deaminase family.</text>
</comment>
<evidence type="ECO:0000255" key="1">
    <source>
        <dbReference type="PROSITE-ProRule" id="PRU01083"/>
    </source>
</evidence>
<evidence type="ECO:0000256" key="2">
    <source>
        <dbReference type="SAM" id="MobiDB-lite"/>
    </source>
</evidence>
<evidence type="ECO:0000269" key="3">
    <source>
    </source>
</evidence>
<evidence type="ECO:0000269" key="4">
    <source>
    </source>
</evidence>
<evidence type="ECO:0000269" key="5">
    <source ref="3"/>
</evidence>
<evidence type="ECO:0000305" key="6"/>
<evidence type="ECO:0007829" key="7">
    <source>
        <dbReference type="PDB" id="2NYT"/>
    </source>
</evidence>
<gene>
    <name type="primary">APOBEC2</name>
</gene>
<name>ABEC2_HUMAN</name>
<sequence length="224" mass="25703">MAQKEEAAVATEAASQNGEDLENLDDPEKLKELIELPPFEIVTGERLPANFFKFQFRNVEYSSGRNKTFLCYVVEAQGKGGQVQASRGYLEDEHAAAHAEEAFFNTILPAFDPALRYNVTWYVSSSPCAACADRIIKTLSKTKNLRLLILVGRLFMWEEPEIQAALKKLKEAGCKLRIMKPQDFEYVWQNFVEQEEGESKAFQPWEDIQENFLYYEEKLADILK</sequence>
<protein>
    <recommendedName>
        <fullName>C-&gt;U-editing enzyme APOBEC-2</fullName>
        <ecNumber evidence="3">3.5.4.36</ecNumber>
    </recommendedName>
    <alternativeName>
        <fullName>mRNA(cytosine(6666)) deaminase 2</fullName>
    </alternativeName>
</protein>
<proteinExistence type="evidence at protein level"/>
<keyword id="KW-0002">3D-structure</keyword>
<keyword id="KW-0378">Hydrolase</keyword>
<keyword id="KW-0479">Metal-binding</keyword>
<keyword id="KW-0507">mRNA processing</keyword>
<keyword id="KW-1267">Proteomics identification</keyword>
<keyword id="KW-1185">Reference proteome</keyword>
<keyword id="KW-0862">Zinc</keyword>
<reference key="1">
    <citation type="journal article" date="1999" name="Biochem. Biophys. Res. Commun.">
        <title>APOBEC-2, a cardiac- and skeletal muscle-specific member of the cytidine deaminase supergene family.</title>
        <authorList>
            <person name="Liao W."/>
            <person name="Hong S.-H."/>
            <person name="Chan B.H.-J."/>
            <person name="Rudolph F.B."/>
            <person name="Clark S.C."/>
            <person name="Chan L."/>
        </authorList>
    </citation>
    <scope>NUCLEOTIDE SEQUENCE [MRNA]</scope>
    <source>
        <tissue>Heart</tissue>
    </source>
</reference>
<reference key="2">
    <citation type="journal article" date="2004" name="Nat. Genet.">
        <title>Complete sequencing and characterization of 21,243 full-length human cDNAs.</title>
        <authorList>
            <person name="Ota T."/>
            <person name="Suzuki Y."/>
            <person name="Nishikawa T."/>
            <person name="Otsuki T."/>
            <person name="Sugiyama T."/>
            <person name="Irie R."/>
            <person name="Wakamatsu A."/>
            <person name="Hayashi K."/>
            <person name="Sato H."/>
            <person name="Nagai K."/>
            <person name="Kimura K."/>
            <person name="Makita H."/>
            <person name="Sekine M."/>
            <person name="Obayashi M."/>
            <person name="Nishi T."/>
            <person name="Shibahara T."/>
            <person name="Tanaka T."/>
            <person name="Ishii S."/>
            <person name="Yamamoto J."/>
            <person name="Saito K."/>
            <person name="Kawai Y."/>
            <person name="Isono Y."/>
            <person name="Nakamura Y."/>
            <person name="Nagahari K."/>
            <person name="Murakami K."/>
            <person name="Yasuda T."/>
            <person name="Iwayanagi T."/>
            <person name="Wagatsuma M."/>
            <person name="Shiratori A."/>
            <person name="Sudo H."/>
            <person name="Hosoiri T."/>
            <person name="Kaku Y."/>
            <person name="Kodaira H."/>
            <person name="Kondo H."/>
            <person name="Sugawara M."/>
            <person name="Takahashi M."/>
            <person name="Kanda K."/>
            <person name="Yokoi T."/>
            <person name="Furuya T."/>
            <person name="Kikkawa E."/>
            <person name="Omura Y."/>
            <person name="Abe K."/>
            <person name="Kamihara K."/>
            <person name="Katsuta N."/>
            <person name="Sato K."/>
            <person name="Tanikawa M."/>
            <person name="Yamazaki M."/>
            <person name="Ninomiya K."/>
            <person name="Ishibashi T."/>
            <person name="Yamashita H."/>
            <person name="Murakawa K."/>
            <person name="Fujimori K."/>
            <person name="Tanai H."/>
            <person name="Kimata M."/>
            <person name="Watanabe M."/>
            <person name="Hiraoka S."/>
            <person name="Chiba Y."/>
            <person name="Ishida S."/>
            <person name="Ono Y."/>
            <person name="Takiguchi S."/>
            <person name="Watanabe S."/>
            <person name="Yosida M."/>
            <person name="Hotuta T."/>
            <person name="Kusano J."/>
            <person name="Kanehori K."/>
            <person name="Takahashi-Fujii A."/>
            <person name="Hara H."/>
            <person name="Tanase T.-O."/>
            <person name="Nomura Y."/>
            <person name="Togiya S."/>
            <person name="Komai F."/>
            <person name="Hara R."/>
            <person name="Takeuchi K."/>
            <person name="Arita M."/>
            <person name="Imose N."/>
            <person name="Musashino K."/>
            <person name="Yuuki H."/>
            <person name="Oshima A."/>
            <person name="Sasaki N."/>
            <person name="Aotsuka S."/>
            <person name="Yoshikawa Y."/>
            <person name="Matsunawa H."/>
            <person name="Ichihara T."/>
            <person name="Shiohata N."/>
            <person name="Sano S."/>
            <person name="Moriya S."/>
            <person name="Momiyama H."/>
            <person name="Satoh N."/>
            <person name="Takami S."/>
            <person name="Terashima Y."/>
            <person name="Suzuki O."/>
            <person name="Nakagawa S."/>
            <person name="Senoh A."/>
            <person name="Mizoguchi H."/>
            <person name="Goto Y."/>
            <person name="Shimizu F."/>
            <person name="Wakebe H."/>
            <person name="Hishigaki H."/>
            <person name="Watanabe T."/>
            <person name="Sugiyama A."/>
            <person name="Takemoto M."/>
            <person name="Kawakami B."/>
            <person name="Yamazaki M."/>
            <person name="Watanabe K."/>
            <person name="Kumagai A."/>
            <person name="Itakura S."/>
            <person name="Fukuzumi Y."/>
            <person name="Fujimori Y."/>
            <person name="Komiyama M."/>
            <person name="Tashiro H."/>
            <person name="Tanigami A."/>
            <person name="Fujiwara T."/>
            <person name="Ono T."/>
            <person name="Yamada K."/>
            <person name="Fujii Y."/>
            <person name="Ozaki K."/>
            <person name="Hirao M."/>
            <person name="Ohmori Y."/>
            <person name="Kawabata A."/>
            <person name="Hikiji T."/>
            <person name="Kobatake N."/>
            <person name="Inagaki H."/>
            <person name="Ikema Y."/>
            <person name="Okamoto S."/>
            <person name="Okitani R."/>
            <person name="Kawakami T."/>
            <person name="Noguchi S."/>
            <person name="Itoh T."/>
            <person name="Shigeta K."/>
            <person name="Senba T."/>
            <person name="Matsumura K."/>
            <person name="Nakajima Y."/>
            <person name="Mizuno T."/>
            <person name="Morinaga M."/>
            <person name="Sasaki M."/>
            <person name="Togashi T."/>
            <person name="Oyama M."/>
            <person name="Hata H."/>
            <person name="Watanabe M."/>
            <person name="Komatsu T."/>
            <person name="Mizushima-Sugano J."/>
            <person name="Satoh T."/>
            <person name="Shirai Y."/>
            <person name="Takahashi Y."/>
            <person name="Nakagawa K."/>
            <person name="Okumura K."/>
            <person name="Nagase T."/>
            <person name="Nomura N."/>
            <person name="Kikuchi H."/>
            <person name="Masuho Y."/>
            <person name="Yamashita R."/>
            <person name="Nakai K."/>
            <person name="Yada T."/>
            <person name="Nakamura Y."/>
            <person name="Ohara O."/>
            <person name="Isogai T."/>
            <person name="Sugano S."/>
        </authorList>
    </citation>
    <scope>NUCLEOTIDE SEQUENCE [LARGE SCALE MRNA]</scope>
    <source>
        <tissue>Skeletal muscle</tissue>
    </source>
</reference>
<reference key="3">
    <citation type="submission" date="2005-04" db="EMBL/GenBank/DDBJ databases">
        <authorList>
            <person name="Totoki Y."/>
            <person name="Toyoda A."/>
            <person name="Takeda T."/>
            <person name="Sakaki Y."/>
            <person name="Tanaka A."/>
            <person name="Yokoyama S."/>
        </authorList>
    </citation>
    <scope>NUCLEOTIDE SEQUENCE [LARGE SCALE MRNA]</scope>
    <scope>VARIANT THR-136</scope>
    <source>
        <tissue>Pancreas</tissue>
    </source>
</reference>
<reference key="4">
    <citation type="journal article" date="2003" name="Nature">
        <title>The DNA sequence and analysis of human chromosome 6.</title>
        <authorList>
            <person name="Mungall A.J."/>
            <person name="Palmer S.A."/>
            <person name="Sims S.K."/>
            <person name="Edwards C.A."/>
            <person name="Ashurst J.L."/>
            <person name="Wilming L."/>
            <person name="Jones M.C."/>
            <person name="Horton R."/>
            <person name="Hunt S.E."/>
            <person name="Scott C.E."/>
            <person name="Gilbert J.G.R."/>
            <person name="Clamp M.E."/>
            <person name="Bethel G."/>
            <person name="Milne S."/>
            <person name="Ainscough R."/>
            <person name="Almeida J.P."/>
            <person name="Ambrose K.D."/>
            <person name="Andrews T.D."/>
            <person name="Ashwell R.I.S."/>
            <person name="Babbage A.K."/>
            <person name="Bagguley C.L."/>
            <person name="Bailey J."/>
            <person name="Banerjee R."/>
            <person name="Barker D.J."/>
            <person name="Barlow K.F."/>
            <person name="Bates K."/>
            <person name="Beare D.M."/>
            <person name="Beasley H."/>
            <person name="Beasley O."/>
            <person name="Bird C.P."/>
            <person name="Blakey S.E."/>
            <person name="Bray-Allen S."/>
            <person name="Brook J."/>
            <person name="Brown A.J."/>
            <person name="Brown J.Y."/>
            <person name="Burford D.C."/>
            <person name="Burrill W."/>
            <person name="Burton J."/>
            <person name="Carder C."/>
            <person name="Carter N.P."/>
            <person name="Chapman J.C."/>
            <person name="Clark S.Y."/>
            <person name="Clark G."/>
            <person name="Clee C.M."/>
            <person name="Clegg S."/>
            <person name="Cobley V."/>
            <person name="Collier R.E."/>
            <person name="Collins J.E."/>
            <person name="Colman L.K."/>
            <person name="Corby N.R."/>
            <person name="Coville G.J."/>
            <person name="Culley K.M."/>
            <person name="Dhami P."/>
            <person name="Davies J."/>
            <person name="Dunn M."/>
            <person name="Earthrowl M.E."/>
            <person name="Ellington A.E."/>
            <person name="Evans K.A."/>
            <person name="Faulkner L."/>
            <person name="Francis M.D."/>
            <person name="Frankish A."/>
            <person name="Frankland J."/>
            <person name="French L."/>
            <person name="Garner P."/>
            <person name="Garnett J."/>
            <person name="Ghori M.J."/>
            <person name="Gilby L.M."/>
            <person name="Gillson C.J."/>
            <person name="Glithero R.J."/>
            <person name="Grafham D.V."/>
            <person name="Grant M."/>
            <person name="Gribble S."/>
            <person name="Griffiths C."/>
            <person name="Griffiths M.N.D."/>
            <person name="Hall R."/>
            <person name="Halls K.S."/>
            <person name="Hammond S."/>
            <person name="Harley J.L."/>
            <person name="Hart E.A."/>
            <person name="Heath P.D."/>
            <person name="Heathcott R."/>
            <person name="Holmes S.J."/>
            <person name="Howden P.J."/>
            <person name="Howe K.L."/>
            <person name="Howell G.R."/>
            <person name="Huckle E."/>
            <person name="Humphray S.J."/>
            <person name="Humphries M.D."/>
            <person name="Hunt A.R."/>
            <person name="Johnson C.M."/>
            <person name="Joy A.A."/>
            <person name="Kay M."/>
            <person name="Keenan S.J."/>
            <person name="Kimberley A.M."/>
            <person name="King A."/>
            <person name="Laird G.K."/>
            <person name="Langford C."/>
            <person name="Lawlor S."/>
            <person name="Leongamornlert D.A."/>
            <person name="Leversha M."/>
            <person name="Lloyd C.R."/>
            <person name="Lloyd D.M."/>
            <person name="Loveland J.E."/>
            <person name="Lovell J."/>
            <person name="Martin S."/>
            <person name="Mashreghi-Mohammadi M."/>
            <person name="Maslen G.L."/>
            <person name="Matthews L."/>
            <person name="McCann O.T."/>
            <person name="McLaren S.J."/>
            <person name="McLay K."/>
            <person name="McMurray A."/>
            <person name="Moore M.J.F."/>
            <person name="Mullikin J.C."/>
            <person name="Niblett D."/>
            <person name="Nickerson T."/>
            <person name="Novik K.L."/>
            <person name="Oliver K."/>
            <person name="Overton-Larty E.K."/>
            <person name="Parker A."/>
            <person name="Patel R."/>
            <person name="Pearce A.V."/>
            <person name="Peck A.I."/>
            <person name="Phillimore B.J.C.T."/>
            <person name="Phillips S."/>
            <person name="Plumb R.W."/>
            <person name="Porter K.M."/>
            <person name="Ramsey Y."/>
            <person name="Ranby S.A."/>
            <person name="Rice C.M."/>
            <person name="Ross M.T."/>
            <person name="Searle S.M."/>
            <person name="Sehra H.K."/>
            <person name="Sheridan E."/>
            <person name="Skuce C.D."/>
            <person name="Smith S."/>
            <person name="Smith M."/>
            <person name="Spraggon L."/>
            <person name="Squares S.L."/>
            <person name="Steward C.A."/>
            <person name="Sycamore N."/>
            <person name="Tamlyn-Hall G."/>
            <person name="Tester J."/>
            <person name="Theaker A.J."/>
            <person name="Thomas D.W."/>
            <person name="Thorpe A."/>
            <person name="Tracey A."/>
            <person name="Tromans A."/>
            <person name="Tubby B."/>
            <person name="Wall M."/>
            <person name="Wallis J.M."/>
            <person name="West A.P."/>
            <person name="White S.S."/>
            <person name="Whitehead S.L."/>
            <person name="Whittaker H."/>
            <person name="Wild A."/>
            <person name="Willey D.J."/>
            <person name="Wilmer T.E."/>
            <person name="Wood J.M."/>
            <person name="Wray P.W."/>
            <person name="Wyatt J.C."/>
            <person name="Young L."/>
            <person name="Younger R.M."/>
            <person name="Bentley D.R."/>
            <person name="Coulson A."/>
            <person name="Durbin R.M."/>
            <person name="Hubbard T."/>
            <person name="Sulston J.E."/>
            <person name="Dunham I."/>
            <person name="Rogers J."/>
            <person name="Beck S."/>
        </authorList>
    </citation>
    <scope>NUCLEOTIDE SEQUENCE [LARGE SCALE GENOMIC DNA]</scope>
</reference>
<reference key="5">
    <citation type="submission" date="2005-07" db="EMBL/GenBank/DDBJ databases">
        <authorList>
            <person name="Mural R.J."/>
            <person name="Istrail S."/>
            <person name="Sutton G.G."/>
            <person name="Florea L."/>
            <person name="Halpern A.L."/>
            <person name="Mobarry C.M."/>
            <person name="Lippert R."/>
            <person name="Walenz B."/>
            <person name="Shatkay H."/>
            <person name="Dew I."/>
            <person name="Miller J.R."/>
            <person name="Flanigan M.J."/>
            <person name="Edwards N.J."/>
            <person name="Bolanos R."/>
            <person name="Fasulo D."/>
            <person name="Halldorsson B.V."/>
            <person name="Hannenhalli S."/>
            <person name="Turner R."/>
            <person name="Yooseph S."/>
            <person name="Lu F."/>
            <person name="Nusskern D.R."/>
            <person name="Shue B.C."/>
            <person name="Zheng X.H."/>
            <person name="Zhong F."/>
            <person name="Delcher A.L."/>
            <person name="Huson D.H."/>
            <person name="Kravitz S.A."/>
            <person name="Mouchard L."/>
            <person name="Reinert K."/>
            <person name="Remington K.A."/>
            <person name="Clark A.G."/>
            <person name="Waterman M.S."/>
            <person name="Eichler E.E."/>
            <person name="Adams M.D."/>
            <person name="Hunkapiller M.W."/>
            <person name="Myers E.W."/>
            <person name="Venter J.C."/>
        </authorList>
    </citation>
    <scope>NUCLEOTIDE SEQUENCE [LARGE SCALE GENOMIC DNA]</scope>
</reference>
<reference key="6">
    <citation type="journal article" date="2004" name="Genome Res.">
        <title>The status, quality, and expansion of the NIH full-length cDNA project: the Mammalian Gene Collection (MGC).</title>
        <authorList>
            <consortium name="The MGC Project Team"/>
        </authorList>
    </citation>
    <scope>NUCLEOTIDE SEQUENCE [LARGE SCALE MRNA]</scope>
    <source>
        <tissue>PNS</tissue>
    </source>
</reference>
<reference key="7">
    <citation type="journal article" date="2011" name="Cell">
        <title>Hydroxylation of 5-methylcytosine by TET1 promotes active DNA demethylation in the adult brain.</title>
        <authorList>
            <person name="Guo J.U."/>
            <person name="Su Y."/>
            <person name="Zhong C."/>
            <person name="Ming G.L."/>
            <person name="Song H."/>
        </authorList>
    </citation>
    <scope>FUNCTION IN DNA DEMETHYLATION</scope>
</reference>
<reference key="8">
    <citation type="journal article" date="2007" name="Nature">
        <title>The APOBEC-2 crystal structure and functional implications for the deaminase AID.</title>
        <authorList>
            <person name="Prochnow C."/>
            <person name="Bransteitter R."/>
            <person name="Klein M.G."/>
            <person name="Goodman M.F."/>
            <person name="Chen X.S."/>
        </authorList>
    </citation>
    <scope>X-RAY CRYSTALLOGRAPHY (2.5 ANGSTROMS) OF 41-224</scope>
    <scope>FUNCTION</scope>
    <scope>CATALYTIC ACTIVITY</scope>
    <scope>SUBUNIT</scope>
    <scope>COFACTOR</scope>
    <scope>ACTIVE SITE</scope>
    <scope>ZINC-BINDING SITES</scope>
</reference>
<dbReference type="EC" id="3.5.4.36" evidence="3"/>
<dbReference type="EMBL" id="AF161698">
    <property type="protein sequence ID" value="AAD45360.1"/>
    <property type="molecule type" value="mRNA"/>
</dbReference>
<dbReference type="EMBL" id="AK223461">
    <property type="protein sequence ID" value="BAD97181.1"/>
    <property type="molecule type" value="mRNA"/>
</dbReference>
<dbReference type="EMBL" id="AK313288">
    <property type="protein sequence ID" value="BAG36096.1"/>
    <property type="molecule type" value="mRNA"/>
</dbReference>
<dbReference type="EMBL" id="AL031778">
    <property type="status" value="NOT_ANNOTATED_CDS"/>
    <property type="molecule type" value="Genomic_DNA"/>
</dbReference>
<dbReference type="EMBL" id="CH471081">
    <property type="protein sequence ID" value="EAX04009.1"/>
    <property type="molecule type" value="Genomic_DNA"/>
</dbReference>
<dbReference type="EMBL" id="BC047767">
    <property type="protein sequence ID" value="AAH47767.1"/>
    <property type="molecule type" value="mRNA"/>
</dbReference>
<dbReference type="EMBL" id="BC069688">
    <property type="protein sequence ID" value="AAH69688.1"/>
    <property type="molecule type" value="mRNA"/>
</dbReference>
<dbReference type="EMBL" id="BC069764">
    <property type="protein sequence ID" value="AAH69764.1"/>
    <property type="molecule type" value="mRNA"/>
</dbReference>
<dbReference type="CCDS" id="CCDS4848.1"/>
<dbReference type="RefSeq" id="NP_006780.1">
    <property type="nucleotide sequence ID" value="NM_006789.4"/>
</dbReference>
<dbReference type="PDB" id="2NYT">
    <property type="method" value="X-ray"/>
    <property type="resolution" value="2.50 A"/>
    <property type="chains" value="A/B/C/D=41-224"/>
</dbReference>
<dbReference type="PDBsum" id="2NYT"/>
<dbReference type="BMRB" id="Q9Y235"/>
<dbReference type="SMR" id="Q9Y235"/>
<dbReference type="BioGRID" id="116133">
    <property type="interactions" value="2"/>
</dbReference>
<dbReference type="DIP" id="DIP-60263N"/>
<dbReference type="FunCoup" id="Q9Y235">
    <property type="interactions" value="226"/>
</dbReference>
<dbReference type="STRING" id="9606.ENSP00000244669"/>
<dbReference type="iPTMnet" id="Q9Y235"/>
<dbReference type="PhosphoSitePlus" id="Q9Y235"/>
<dbReference type="BioMuta" id="APOBEC2"/>
<dbReference type="DMDM" id="23396446"/>
<dbReference type="MassIVE" id="Q9Y235"/>
<dbReference type="PaxDb" id="9606-ENSP00000244669"/>
<dbReference type="PeptideAtlas" id="Q9Y235"/>
<dbReference type="ProteomicsDB" id="85628"/>
<dbReference type="Antibodypedia" id="2816">
    <property type="antibodies" value="275 antibodies from 31 providers"/>
</dbReference>
<dbReference type="DNASU" id="10930"/>
<dbReference type="Ensembl" id="ENST00000244669.3">
    <property type="protein sequence ID" value="ENSP00000244669.2"/>
    <property type="gene ID" value="ENSG00000124701.6"/>
</dbReference>
<dbReference type="GeneID" id="10930"/>
<dbReference type="KEGG" id="hsa:10930"/>
<dbReference type="MANE-Select" id="ENST00000244669.3">
    <property type="protein sequence ID" value="ENSP00000244669.2"/>
    <property type="RefSeq nucleotide sequence ID" value="NM_006789.4"/>
    <property type="RefSeq protein sequence ID" value="NP_006780.1"/>
</dbReference>
<dbReference type="UCSC" id="uc003opl.4">
    <property type="organism name" value="human"/>
</dbReference>
<dbReference type="AGR" id="HGNC:605"/>
<dbReference type="CTD" id="10930"/>
<dbReference type="DisGeNET" id="10930"/>
<dbReference type="GeneCards" id="APOBEC2"/>
<dbReference type="HGNC" id="HGNC:605">
    <property type="gene designation" value="APOBEC2"/>
</dbReference>
<dbReference type="HPA" id="ENSG00000124701">
    <property type="expression patterns" value="Tissue enhanced (heart muscle, skeletal muscle, tongue)"/>
</dbReference>
<dbReference type="MIM" id="604797">
    <property type="type" value="gene"/>
</dbReference>
<dbReference type="neXtProt" id="NX_Q9Y235"/>
<dbReference type="OpenTargets" id="ENSG00000124701"/>
<dbReference type="PharmGKB" id="PA24890"/>
<dbReference type="VEuPathDB" id="HostDB:ENSG00000124701"/>
<dbReference type="eggNOG" id="ENOG502RABR">
    <property type="taxonomic scope" value="Eukaryota"/>
</dbReference>
<dbReference type="GeneTree" id="ENSGT00940000156616"/>
<dbReference type="HOGENOM" id="CLU_080056_0_0_1"/>
<dbReference type="InParanoid" id="Q9Y235"/>
<dbReference type="OMA" id="WEEPDIQ"/>
<dbReference type="OrthoDB" id="8841220at2759"/>
<dbReference type="PAN-GO" id="Q9Y235">
    <property type="GO annotations" value="6 GO annotations based on evolutionary models"/>
</dbReference>
<dbReference type="PhylomeDB" id="Q9Y235"/>
<dbReference type="TreeFam" id="TF331356"/>
<dbReference type="PathwayCommons" id="Q9Y235"/>
<dbReference type="Reactome" id="R-HSA-72200">
    <property type="pathway name" value="mRNA Editing: C to U Conversion"/>
</dbReference>
<dbReference type="Reactome" id="R-HSA-75094">
    <property type="pathway name" value="Formation of the Editosome"/>
</dbReference>
<dbReference type="BioGRID-ORCS" id="10930">
    <property type="hits" value="11 hits in 1153 CRISPR screens"/>
</dbReference>
<dbReference type="ChiTaRS" id="APOBEC2">
    <property type="organism name" value="human"/>
</dbReference>
<dbReference type="EvolutionaryTrace" id="Q9Y235"/>
<dbReference type="GeneWiki" id="APOBEC2"/>
<dbReference type="GenomeRNAi" id="10930"/>
<dbReference type="Pharos" id="Q9Y235">
    <property type="development level" value="Tbio"/>
</dbReference>
<dbReference type="PRO" id="PR:Q9Y235"/>
<dbReference type="Proteomes" id="UP000005640">
    <property type="component" value="Chromosome 6"/>
</dbReference>
<dbReference type="RNAct" id="Q9Y235">
    <property type="molecule type" value="protein"/>
</dbReference>
<dbReference type="Bgee" id="ENSG00000124701">
    <property type="expression patterns" value="Expressed in skeletal muscle tissue of rectus abdominis and 137 other cell types or tissues"/>
</dbReference>
<dbReference type="GO" id="GO:0005737">
    <property type="term" value="C:cytoplasm"/>
    <property type="evidence" value="ECO:0000318"/>
    <property type="project" value="GO_Central"/>
</dbReference>
<dbReference type="GO" id="GO:0005634">
    <property type="term" value="C:nucleus"/>
    <property type="evidence" value="ECO:0000318"/>
    <property type="project" value="GO_Central"/>
</dbReference>
<dbReference type="GO" id="GO:0004126">
    <property type="term" value="F:cytidine deaminase activity"/>
    <property type="evidence" value="ECO:0000314"/>
    <property type="project" value="MGI"/>
</dbReference>
<dbReference type="GO" id="GO:0042802">
    <property type="term" value="F:identical protein binding"/>
    <property type="evidence" value="ECO:0000353"/>
    <property type="project" value="IntAct"/>
</dbReference>
<dbReference type="GO" id="GO:0046872">
    <property type="term" value="F:metal ion binding"/>
    <property type="evidence" value="ECO:0007669"/>
    <property type="project" value="UniProtKB-KW"/>
</dbReference>
<dbReference type="GO" id="GO:0003723">
    <property type="term" value="F:RNA binding"/>
    <property type="evidence" value="ECO:0000318"/>
    <property type="project" value="GO_Central"/>
</dbReference>
<dbReference type="GO" id="GO:0016554">
    <property type="term" value="P:cytidine to uridine editing"/>
    <property type="evidence" value="ECO:0000314"/>
    <property type="project" value="MGI"/>
</dbReference>
<dbReference type="GO" id="GO:0016556">
    <property type="term" value="P:mRNA modification"/>
    <property type="evidence" value="ECO:0007669"/>
    <property type="project" value="Ensembl"/>
</dbReference>
<dbReference type="GO" id="GO:0006397">
    <property type="term" value="P:mRNA processing"/>
    <property type="evidence" value="ECO:0007669"/>
    <property type="project" value="UniProtKB-KW"/>
</dbReference>
<dbReference type="GO" id="GO:0044029">
    <property type="term" value="P:positive regulation of gene expression via chromosomal CpG island demethylation"/>
    <property type="evidence" value="ECO:0000314"/>
    <property type="project" value="UniProtKB"/>
</dbReference>
<dbReference type="FunFam" id="3.40.140.10:FF:000031">
    <property type="entry name" value="Probable C-&gt;U-editing enzyme APOBEC-2"/>
    <property type="match status" value="1"/>
</dbReference>
<dbReference type="Gene3D" id="3.40.140.10">
    <property type="entry name" value="Cytidine Deaminase, domain 2"/>
    <property type="match status" value="1"/>
</dbReference>
<dbReference type="InterPro" id="IPR050610">
    <property type="entry name" value="APOBEC_Cyt_Deaminase"/>
</dbReference>
<dbReference type="InterPro" id="IPR002125">
    <property type="entry name" value="CMP_dCMP_dom"/>
</dbReference>
<dbReference type="InterPro" id="IPR016193">
    <property type="entry name" value="Cytidine_deaminase-like"/>
</dbReference>
<dbReference type="PANTHER" id="PTHR13857:SF4">
    <property type="entry name" value="C-U-EDITING ENZYME APOBEC-2"/>
    <property type="match status" value="1"/>
</dbReference>
<dbReference type="PANTHER" id="PTHR13857">
    <property type="entry name" value="MRNA EDITING ENZYME"/>
    <property type="match status" value="1"/>
</dbReference>
<dbReference type="Pfam" id="PF18772">
    <property type="entry name" value="APOBEC2"/>
    <property type="match status" value="1"/>
</dbReference>
<dbReference type="SUPFAM" id="SSF53927">
    <property type="entry name" value="Cytidine deaminase-like"/>
    <property type="match status" value="1"/>
</dbReference>
<dbReference type="PROSITE" id="PS51747">
    <property type="entry name" value="CYT_DCMP_DEAMINASES_2"/>
    <property type="match status" value="1"/>
</dbReference>
<feature type="chain" id="PRO_0000171749" description="C-&gt;U-editing enzyme APOBEC-2">
    <location>
        <begin position="1"/>
        <end position="224"/>
    </location>
</feature>
<feature type="domain" description="CMP/dCMP-type deaminase" evidence="1">
    <location>
        <begin position="64"/>
        <end position="169"/>
    </location>
</feature>
<feature type="region of interest" description="Disordered" evidence="2">
    <location>
        <begin position="1"/>
        <end position="24"/>
    </location>
</feature>
<feature type="active site" description="Proton donor" evidence="3">
    <location>
        <position position="100"/>
    </location>
</feature>
<feature type="binding site" evidence="3">
    <location>
        <position position="60"/>
    </location>
    <ligand>
        <name>Zn(2+)</name>
        <dbReference type="ChEBI" id="CHEBI:29105"/>
        <note>catalytic</note>
    </ligand>
</feature>
<feature type="binding site" evidence="3">
    <location>
        <position position="98"/>
    </location>
    <ligand>
        <name>Zn(2+)</name>
        <dbReference type="ChEBI" id="CHEBI:29105"/>
        <note>catalytic</note>
    </ligand>
</feature>
<feature type="binding site" evidence="3">
    <location>
        <position position="128"/>
    </location>
    <ligand>
        <name>Zn(2+)</name>
        <dbReference type="ChEBI" id="CHEBI:29105"/>
        <note>catalytic</note>
    </ligand>
</feature>
<feature type="binding site" evidence="3">
    <location>
        <position position="131"/>
    </location>
    <ligand>
        <name>Zn(2+)</name>
        <dbReference type="ChEBI" id="CHEBI:29105"/>
        <note>catalytic</note>
    </ligand>
</feature>
<feature type="sequence variant" id="VAR_024406" description="In dbSNP:rs2076472." evidence="5">
    <original>I</original>
    <variation>T</variation>
    <location>
        <position position="136"/>
    </location>
</feature>
<feature type="helix" evidence="7">
    <location>
        <begin position="48"/>
        <end position="53"/>
    </location>
</feature>
<feature type="turn" evidence="7">
    <location>
        <begin position="54"/>
        <end position="56"/>
    </location>
</feature>
<feature type="strand" evidence="7">
    <location>
        <begin position="62"/>
        <end position="64"/>
    </location>
</feature>
<feature type="strand" evidence="7">
    <location>
        <begin position="68"/>
        <end position="77"/>
    </location>
</feature>
<feature type="strand" evidence="7">
    <location>
        <begin position="83"/>
        <end position="94"/>
    </location>
</feature>
<feature type="helix" evidence="7">
    <location>
        <begin position="99"/>
        <end position="106"/>
    </location>
</feature>
<feature type="strand" evidence="7">
    <location>
        <begin position="116"/>
        <end position="125"/>
    </location>
</feature>
<feature type="helix" evidence="7">
    <location>
        <begin position="129"/>
        <end position="141"/>
    </location>
</feature>
<feature type="strand" evidence="7">
    <location>
        <begin position="145"/>
        <end position="153"/>
    </location>
</feature>
<feature type="helix" evidence="7">
    <location>
        <begin position="160"/>
        <end position="171"/>
    </location>
</feature>
<feature type="strand" evidence="7">
    <location>
        <begin position="175"/>
        <end position="178"/>
    </location>
</feature>
<feature type="helix" evidence="7">
    <location>
        <begin position="181"/>
        <end position="191"/>
    </location>
</feature>
<feature type="helix" evidence="7">
    <location>
        <begin position="208"/>
        <end position="223"/>
    </location>
</feature>
<organism>
    <name type="scientific">Homo sapiens</name>
    <name type="common">Human</name>
    <dbReference type="NCBI Taxonomy" id="9606"/>
    <lineage>
        <taxon>Eukaryota</taxon>
        <taxon>Metazoa</taxon>
        <taxon>Chordata</taxon>
        <taxon>Craniata</taxon>
        <taxon>Vertebrata</taxon>
        <taxon>Euteleostomi</taxon>
        <taxon>Mammalia</taxon>
        <taxon>Eutheria</taxon>
        <taxon>Euarchontoglires</taxon>
        <taxon>Primates</taxon>
        <taxon>Haplorrhini</taxon>
        <taxon>Catarrhini</taxon>
        <taxon>Hominidae</taxon>
        <taxon>Homo</taxon>
    </lineage>
</organism>
<accession>Q9Y235</accession>
<accession>B2R899</accession>
<accession>Q53F28</accession>
<accession>Q5TGU5</accession>
<accession>Q5TGU6</accession>